<sequence length="7" mass="943">QPWLPFR</sequence>
<keyword id="KW-0027">Amidation</keyword>
<keyword id="KW-0878">Amphibian defense peptide</keyword>
<keyword id="KW-0903">Direct protein sequencing</keyword>
<keyword id="KW-0873">Pyrrolidone carboxylic acid</keyword>
<keyword id="KW-0964">Secreted</keyword>
<evidence type="ECO:0000269" key="1">
    <source>
    </source>
</evidence>
<evidence type="ECO:0000305" key="2"/>
<comment type="subcellular location">
    <subcellularLocation>
        <location evidence="1">Secreted</location>
    </subcellularLocation>
</comment>
<comment type="tissue specificity">
    <text evidence="1">Expressed by the skin dorsal glands.</text>
</comment>
<comment type="mass spectrometry" mass="924.0" method="Electrospray" evidence="1"/>
<comment type="similarity">
    <text evidence="2">Belongs to the frog skin active peptide (FSAP) family. Peroniin subfamily.</text>
</comment>
<feature type="peptide" id="PRO_0000394187" description="Peroniin-1.5">
    <location>
        <begin position="1"/>
        <end position="7"/>
    </location>
</feature>
<feature type="modified residue" description="Pyrrolidone carboxylic acid" evidence="1">
    <location>
        <position position="1"/>
    </location>
</feature>
<feature type="modified residue" description="Arginine amide" evidence="1">
    <location>
        <position position="7"/>
    </location>
</feature>
<organism>
    <name type="scientific">Litoria peronii</name>
    <name type="common">Emerald spotted tree frog</name>
    <name type="synonym">Hyla peronii</name>
    <dbReference type="NCBI Taxonomy" id="317363"/>
    <lineage>
        <taxon>Eukaryota</taxon>
        <taxon>Metazoa</taxon>
        <taxon>Chordata</taxon>
        <taxon>Craniata</taxon>
        <taxon>Vertebrata</taxon>
        <taxon>Euteleostomi</taxon>
        <taxon>Amphibia</taxon>
        <taxon>Batrachia</taxon>
        <taxon>Anura</taxon>
        <taxon>Neobatrachia</taxon>
        <taxon>Hyloidea</taxon>
        <taxon>Hylidae</taxon>
        <taxon>Pelodryadinae</taxon>
        <taxon>Litoria</taxon>
    </lineage>
</organism>
<protein>
    <recommendedName>
        <fullName>Peroniin-1.5</fullName>
    </recommendedName>
</protein>
<name>PE15_LITPE</name>
<reference evidence="2" key="1">
    <citation type="journal article" date="2009" name="Rapid Commun. Mass Spectrom.">
        <title>The host-defence skin peptide profiles of Peron's Tree Frog Litoria peronii in winter and summer. Sequence determination by electrospray mass spectrometry and activities of the peptides.</title>
        <authorList>
            <person name="Bilusich D."/>
            <person name="Jackway R.J."/>
            <person name="Musgrave I.F."/>
            <person name="Tyler M.J."/>
            <person name="Bowie J.H."/>
        </authorList>
    </citation>
    <scope>PROTEIN SEQUENCE</scope>
    <scope>SUBCELLULAR LOCATION</scope>
    <scope>TISSUE SPECIFICITY</scope>
    <scope>MASS SPECTROMETRY</scope>
    <scope>PYROGLUTAMATE FORMATION AT GLN-1</scope>
    <scope>AMIDATION AT ARG-7</scope>
    <source>
        <tissue evidence="1">Skin secretion</tissue>
    </source>
</reference>
<dbReference type="GO" id="GO:0005576">
    <property type="term" value="C:extracellular region"/>
    <property type="evidence" value="ECO:0000314"/>
    <property type="project" value="UniProtKB"/>
</dbReference>
<dbReference type="GO" id="GO:0006952">
    <property type="term" value="P:defense response"/>
    <property type="evidence" value="ECO:0007669"/>
    <property type="project" value="UniProtKB-KW"/>
</dbReference>
<accession>P86482</accession>
<proteinExistence type="evidence at protein level"/>